<keyword id="KW-0025">Alternative splicing</keyword>
<keyword id="KW-0963">Cytoplasm</keyword>
<keyword id="KW-0221">Differentiation</keyword>
<keyword id="KW-1185">Reference proteome</keyword>
<keyword id="KW-0677">Repeat</keyword>
<keyword id="KW-0744">Spermatogenesis</keyword>
<keyword id="KW-0808">Transferase</keyword>
<keyword id="KW-0833">Ubl conjugation pathway</keyword>
<comment type="function">
    <text evidence="3">Probable E3 ubiquitin-protein ligase involved in either protein trafficking or in the distribution of cellular structures. Required for spermatozoon maturation and fertility, and for the removal of the cytoplasmic droplet of the spermatozoon. E3 ubiquitin-protein ligases accept ubiquitin from an E2 ubiquitin-conjugating enzyme in the form of a thioester and then directly transfer it to targeted substrates.</text>
</comment>
<comment type="catalytic activity">
    <reaction>
        <text>S-ubiquitinyl-[E2 ubiquitin-conjugating enzyme]-L-cysteine + [acceptor protein]-L-lysine = [E2 ubiquitin-conjugating enzyme]-L-cysteine + N(6)-ubiquitinyl-[acceptor protein]-L-lysine.</text>
        <dbReference type="EC" id="2.3.2.26"/>
    </reaction>
</comment>
<comment type="pathway">
    <text>Protein modification; protein ubiquitination.</text>
</comment>
<comment type="subcellular location">
    <subcellularLocation>
        <location evidence="1">Cytoplasm</location>
        <location evidence="1">Cytosol</location>
    </subcellularLocation>
</comment>
<comment type="alternative products">
    <event type="alternative splicing"/>
    <isoform>
        <id>Q6PAV2-1</id>
        <name>1</name>
        <sequence type="displayed"/>
    </isoform>
    <isoform>
        <id>Q6PAV2-2</id>
        <name>2</name>
        <sequence type="described" ref="VSP_023182"/>
    </isoform>
    <isoform>
        <id>Q6PAV2-3</id>
        <name>3</name>
        <sequence type="described" ref="VSP_023180 VSP_023181"/>
    </isoform>
</comment>
<comment type="tissue specificity">
    <text evidence="3">Ubiquitously expressed, highest expression is found in testis during spermiogenesis. It is specifically found in spermatogonia, spermatocytes, and spermatids with little or no expression detectable in the spermatozoa, or interstitial cells.</text>
</comment>
<comment type="developmental stage">
    <text evidence="3">Highly expressed in testis during spermiogenesis. Expression was almost undetectable in testes at postnatal day 14 (P14). However, by P23, a strong increase in mRNA levels was observed with expression persisting to P40 when spermatozoa were first observed. Up-regulated in the uterine luminal epithelium at the time of embryo implantation.</text>
</comment>
<comment type="disruption phenotype">
    <text evidence="3">Disruption causes defects in spermatozoon maturation and impaired fertility in males; females display normal fertility. Males produce litter sizes some 50% smaller, as well 50% of mature spermatozoa have reduced mobility.</text>
</comment>
<comment type="miscellaneous">
    <text>T.wilfordii induces abnormal expression of spermiogenesis genes including Herc4, the spermatogenic cells in the convoluted seminiferous tubules decrease and the lumen is obstructed by large deciduous spermatogenic cells. T.wilfordii has apparent antifertility effects.</text>
</comment>
<feature type="chain" id="PRO_0000278217" description="Probable E3 ubiquitin-protein ligase HERC4">
    <location>
        <begin position="1"/>
        <end position="1057"/>
    </location>
</feature>
<feature type="repeat" description="RCC1 1">
    <location>
        <begin position="1"/>
        <end position="51"/>
    </location>
</feature>
<feature type="repeat" description="RCC1 2">
    <location>
        <begin position="52"/>
        <end position="101"/>
    </location>
</feature>
<feature type="repeat" description="RCC1 3">
    <location>
        <begin position="102"/>
        <end position="154"/>
    </location>
</feature>
<feature type="repeat" description="RCC1 4">
    <location>
        <begin position="156"/>
        <end position="207"/>
    </location>
</feature>
<feature type="repeat" description="RCC1 5">
    <location>
        <begin position="208"/>
        <end position="259"/>
    </location>
</feature>
<feature type="repeat" description="RCC1 6">
    <location>
        <begin position="261"/>
        <end position="311"/>
    </location>
</feature>
<feature type="repeat" description="RCC1 7">
    <location>
        <begin position="313"/>
        <end position="366"/>
    </location>
</feature>
<feature type="domain" description="HECT" evidence="2">
    <location>
        <begin position="730"/>
        <end position="1057"/>
    </location>
</feature>
<feature type="active site" description="Glycyl thioester intermediate" evidence="2">
    <location>
        <position position="1025"/>
    </location>
</feature>
<feature type="splice variant" id="VSP_023180" description="In isoform 3." evidence="5">
    <original>DRYVP</original>
    <variation>GRCAL</variation>
    <location>
        <begin position="229"/>
        <end position="233"/>
    </location>
</feature>
<feature type="splice variant" id="VSP_023181" description="In isoform 3." evidence="5">
    <location>
        <begin position="234"/>
        <end position="1057"/>
    </location>
</feature>
<feature type="splice variant" id="VSP_023182" description="In isoform 2." evidence="4 5">
    <location>
        <begin position="643"/>
        <end position="650"/>
    </location>
</feature>
<feature type="sequence conflict" description="In Ref. 2; AAH60033." evidence="6" ref="2">
    <original>V</original>
    <variation>A</variation>
    <location>
        <position position="299"/>
    </location>
</feature>
<feature type="sequence conflict" description="In Ref. 1; BAE25272." evidence="6" ref="1">
    <original>V</original>
    <variation>I</variation>
    <location>
        <position position="800"/>
    </location>
</feature>
<feature type="sequence conflict" description="In Ref. 1; BAE26617." evidence="6" ref="1">
    <original>D</original>
    <variation>N</variation>
    <location>
        <position position="898"/>
    </location>
</feature>
<evidence type="ECO:0000250" key="1">
    <source>
        <dbReference type="UniProtKB" id="Q5GLZ8"/>
    </source>
</evidence>
<evidence type="ECO:0000255" key="2">
    <source>
        <dbReference type="PROSITE-ProRule" id="PRU00104"/>
    </source>
</evidence>
<evidence type="ECO:0000269" key="3">
    <source>
    </source>
</evidence>
<evidence type="ECO:0000303" key="4">
    <source>
    </source>
</evidence>
<evidence type="ECO:0000303" key="5">
    <source>
    </source>
</evidence>
<evidence type="ECO:0000305" key="6"/>
<organism>
    <name type="scientific">Mus musculus</name>
    <name type="common">Mouse</name>
    <dbReference type="NCBI Taxonomy" id="10090"/>
    <lineage>
        <taxon>Eukaryota</taxon>
        <taxon>Metazoa</taxon>
        <taxon>Chordata</taxon>
        <taxon>Craniata</taxon>
        <taxon>Vertebrata</taxon>
        <taxon>Euteleostomi</taxon>
        <taxon>Mammalia</taxon>
        <taxon>Eutheria</taxon>
        <taxon>Euarchontoglires</taxon>
        <taxon>Glires</taxon>
        <taxon>Rodentia</taxon>
        <taxon>Myomorpha</taxon>
        <taxon>Muroidea</taxon>
        <taxon>Muridae</taxon>
        <taxon>Murinae</taxon>
        <taxon>Mus</taxon>
        <taxon>Mus</taxon>
    </lineage>
</organism>
<sequence>MLCWGNASYGQLGLGGIDEEIVLEPRRSDFFVNKKVRDVGCGLRHTVFVLDDGTVYTCGCNDLGQLGHEKSRKKPEQVVALDAQNIVAVACGEAHTLALNDKGQVYAWGLDSDGQLGLQGSEECIRVPRNIKSLSDIQIVQVACGYYHSLALSKASEVFCWGQNKYGQLGLGIDCQKQTSPQLIKSLLGIPFMQVAAGGAHSFVLTLSGAIFGWGRNKFGQLGLNDENDRYVPNLLKSLRSQKIVYICCGEDHTAALTKEGGVFTFGAGGYGQLGHNSTSHEINPRKVFELMGSIVTQVACGRQHTSAFVPSSGRIYSFGLGGNGQLGTGSTSNRKSPFTVKGNWFSYNGQCPQDIGSEDYFCVKRIFSGGDQSFSHYSSPQNCGPPDDFRCSDPSKQIWTVNEALIQKWLSYPSGRFPVEIANEIDGTFSSSGCLNGSFLAISNDDHYRTGTRFSGVDMNAARLLFHKLIQPDHPQISQQVAASLEKNLIPKLTSSLPDVEALRFYLTLPECPLMSDCNNFTTIAIPFGTALVNLEKAPLKVLENWWSVLEPPLFLKIVELFKEVVVHLLKLYKIGIPPSERRIFNSFLHTALKVLEILHRVNEKTGQLIQYDKFYIHEVQELIDIRNDYINWVQQQAYGVDVSHGVTELADIPVTICTYPFVFDAQAKTTLLQTDAVLQMQMAIDQAHRQNVSSLFLPVIESVNPCLILVVRRENIVGDAMEVLRKTKNIDYKKPLKVIFVGEDAVDAGGVRKEFFLLIMRELLDPKYGMFRYYEDSRLIWFSDKTFEDSDLFHLIGVICGLAIYNFTIVDLHFPLALYKKLLKRKPSLDDLKELMPAVGRSMQQLLDYPEDDIEETFCLNFTITVENFGATEVKELVLNGADTAVNRQNRQEFVDAYVDYIFNKSVASLFDAFHAGFHKVCGGKVLLLFQPNELQAMVIGNTNYDWKELEKNTEYKGEYWADHPTIKIFWEVFHELPLEKKKQFLLFLTGSDRIPILGMKSLKLVIQSTGGGESYLPVSHTCFNLLDLPKYTEKETLRCKLIQAIDHNEGFSLI</sequence>
<proteinExistence type="evidence at protein level"/>
<name>HERC4_MOUSE</name>
<protein>
    <recommendedName>
        <fullName>Probable E3 ubiquitin-protein ligase HERC4</fullName>
        <ecNumber>2.3.2.26</ecNumber>
    </recommendedName>
    <alternativeName>
        <fullName>HECT domain and RCC1-like domain-containing protein 4</fullName>
    </alternativeName>
    <alternativeName>
        <fullName>HECT-type E3 ubiquitin transferase HERC4</fullName>
    </alternativeName>
</protein>
<accession>Q6PAV2</accession>
<accession>Q3UL34</accession>
<accession>Q3UPX2</accession>
<accession>Q810A0</accession>
<accession>Q811C9</accession>
<accession>Q8R315</accession>
<accession>Q9D797</accession>
<reference key="1">
    <citation type="journal article" date="2005" name="Science">
        <title>The transcriptional landscape of the mammalian genome.</title>
        <authorList>
            <person name="Carninci P."/>
            <person name="Kasukawa T."/>
            <person name="Katayama S."/>
            <person name="Gough J."/>
            <person name="Frith M.C."/>
            <person name="Maeda N."/>
            <person name="Oyama R."/>
            <person name="Ravasi T."/>
            <person name="Lenhard B."/>
            <person name="Wells C."/>
            <person name="Kodzius R."/>
            <person name="Shimokawa K."/>
            <person name="Bajic V.B."/>
            <person name="Brenner S.E."/>
            <person name="Batalov S."/>
            <person name="Forrest A.R."/>
            <person name="Zavolan M."/>
            <person name="Davis M.J."/>
            <person name="Wilming L.G."/>
            <person name="Aidinis V."/>
            <person name="Allen J.E."/>
            <person name="Ambesi-Impiombato A."/>
            <person name="Apweiler R."/>
            <person name="Aturaliya R.N."/>
            <person name="Bailey T.L."/>
            <person name="Bansal M."/>
            <person name="Baxter L."/>
            <person name="Beisel K.W."/>
            <person name="Bersano T."/>
            <person name="Bono H."/>
            <person name="Chalk A.M."/>
            <person name="Chiu K.P."/>
            <person name="Choudhary V."/>
            <person name="Christoffels A."/>
            <person name="Clutterbuck D.R."/>
            <person name="Crowe M.L."/>
            <person name="Dalla E."/>
            <person name="Dalrymple B.P."/>
            <person name="de Bono B."/>
            <person name="Della Gatta G."/>
            <person name="di Bernardo D."/>
            <person name="Down T."/>
            <person name="Engstrom P."/>
            <person name="Fagiolini M."/>
            <person name="Faulkner G."/>
            <person name="Fletcher C.F."/>
            <person name="Fukushima T."/>
            <person name="Furuno M."/>
            <person name="Futaki S."/>
            <person name="Gariboldi M."/>
            <person name="Georgii-Hemming P."/>
            <person name="Gingeras T.R."/>
            <person name="Gojobori T."/>
            <person name="Green R.E."/>
            <person name="Gustincich S."/>
            <person name="Harbers M."/>
            <person name="Hayashi Y."/>
            <person name="Hensch T.K."/>
            <person name="Hirokawa N."/>
            <person name="Hill D."/>
            <person name="Huminiecki L."/>
            <person name="Iacono M."/>
            <person name="Ikeo K."/>
            <person name="Iwama A."/>
            <person name="Ishikawa T."/>
            <person name="Jakt M."/>
            <person name="Kanapin A."/>
            <person name="Katoh M."/>
            <person name="Kawasawa Y."/>
            <person name="Kelso J."/>
            <person name="Kitamura H."/>
            <person name="Kitano H."/>
            <person name="Kollias G."/>
            <person name="Krishnan S.P."/>
            <person name="Kruger A."/>
            <person name="Kummerfeld S.K."/>
            <person name="Kurochkin I.V."/>
            <person name="Lareau L.F."/>
            <person name="Lazarevic D."/>
            <person name="Lipovich L."/>
            <person name="Liu J."/>
            <person name="Liuni S."/>
            <person name="McWilliam S."/>
            <person name="Madan Babu M."/>
            <person name="Madera M."/>
            <person name="Marchionni L."/>
            <person name="Matsuda H."/>
            <person name="Matsuzawa S."/>
            <person name="Miki H."/>
            <person name="Mignone F."/>
            <person name="Miyake S."/>
            <person name="Morris K."/>
            <person name="Mottagui-Tabar S."/>
            <person name="Mulder N."/>
            <person name="Nakano N."/>
            <person name="Nakauchi H."/>
            <person name="Ng P."/>
            <person name="Nilsson R."/>
            <person name="Nishiguchi S."/>
            <person name="Nishikawa S."/>
            <person name="Nori F."/>
            <person name="Ohara O."/>
            <person name="Okazaki Y."/>
            <person name="Orlando V."/>
            <person name="Pang K.C."/>
            <person name="Pavan W.J."/>
            <person name="Pavesi G."/>
            <person name="Pesole G."/>
            <person name="Petrovsky N."/>
            <person name="Piazza S."/>
            <person name="Reed J."/>
            <person name="Reid J.F."/>
            <person name="Ring B.Z."/>
            <person name="Ringwald M."/>
            <person name="Rost B."/>
            <person name="Ruan Y."/>
            <person name="Salzberg S.L."/>
            <person name="Sandelin A."/>
            <person name="Schneider C."/>
            <person name="Schoenbach C."/>
            <person name="Sekiguchi K."/>
            <person name="Semple C.A."/>
            <person name="Seno S."/>
            <person name="Sessa L."/>
            <person name="Sheng Y."/>
            <person name="Shibata Y."/>
            <person name="Shimada H."/>
            <person name="Shimada K."/>
            <person name="Silva D."/>
            <person name="Sinclair B."/>
            <person name="Sperling S."/>
            <person name="Stupka E."/>
            <person name="Sugiura K."/>
            <person name="Sultana R."/>
            <person name="Takenaka Y."/>
            <person name="Taki K."/>
            <person name="Tammoja K."/>
            <person name="Tan S.L."/>
            <person name="Tang S."/>
            <person name="Taylor M.S."/>
            <person name="Tegner J."/>
            <person name="Teichmann S.A."/>
            <person name="Ueda H.R."/>
            <person name="van Nimwegen E."/>
            <person name="Verardo R."/>
            <person name="Wei C.L."/>
            <person name="Yagi K."/>
            <person name="Yamanishi H."/>
            <person name="Zabarovsky E."/>
            <person name="Zhu S."/>
            <person name="Zimmer A."/>
            <person name="Hide W."/>
            <person name="Bult C."/>
            <person name="Grimmond S.M."/>
            <person name="Teasdale R.D."/>
            <person name="Liu E.T."/>
            <person name="Brusic V."/>
            <person name="Quackenbush J."/>
            <person name="Wahlestedt C."/>
            <person name="Mattick J.S."/>
            <person name="Hume D.A."/>
            <person name="Kai C."/>
            <person name="Sasaki D."/>
            <person name="Tomaru Y."/>
            <person name="Fukuda S."/>
            <person name="Kanamori-Katayama M."/>
            <person name="Suzuki M."/>
            <person name="Aoki J."/>
            <person name="Arakawa T."/>
            <person name="Iida J."/>
            <person name="Imamura K."/>
            <person name="Itoh M."/>
            <person name="Kato T."/>
            <person name="Kawaji H."/>
            <person name="Kawagashira N."/>
            <person name="Kawashima T."/>
            <person name="Kojima M."/>
            <person name="Kondo S."/>
            <person name="Konno H."/>
            <person name="Nakano K."/>
            <person name="Ninomiya N."/>
            <person name="Nishio T."/>
            <person name="Okada M."/>
            <person name="Plessy C."/>
            <person name="Shibata K."/>
            <person name="Shiraki T."/>
            <person name="Suzuki S."/>
            <person name="Tagami M."/>
            <person name="Waki K."/>
            <person name="Watahiki A."/>
            <person name="Okamura-Oho Y."/>
            <person name="Suzuki H."/>
            <person name="Kawai J."/>
            <person name="Hayashizaki Y."/>
        </authorList>
    </citation>
    <scope>NUCLEOTIDE SEQUENCE [LARGE SCALE MRNA] (ISOFORMS 1; 2 AND 3)</scope>
    <source>
        <strain>C57BL/6J</strain>
        <tissue>Blastocyst</tissue>
        <tissue>Eye</tissue>
        <tissue>Melanocyte</tissue>
        <tissue>Tongue</tissue>
    </source>
</reference>
<reference key="2">
    <citation type="journal article" date="2004" name="Genome Res.">
        <title>The status, quality, and expansion of the NIH full-length cDNA project: the Mammalian Gene Collection (MGC).</title>
        <authorList>
            <consortium name="The MGC Project Team"/>
        </authorList>
    </citation>
    <scope>NUCLEOTIDE SEQUENCE [LARGE SCALE MRNA] (ISOFORMS 1 AND 2)</scope>
    <source>
        <strain>C57BL/6J</strain>
        <strain>FVB/N</strain>
        <strain>FVB/N-3</strain>
        <tissue>Brain</tissue>
        <tissue>Colon</tissue>
        <tissue>Mammary tumor</tissue>
    </source>
</reference>
<reference key="3">
    <citation type="journal article" date="2007" name="Dev. Biol.">
        <title>Disruption of the ubiquitin ligase HERC4 causes defects in spermatozoon maturation and impaired fertility.</title>
        <authorList>
            <person name="Rodriguez C.I."/>
            <person name="Stewart C.L."/>
        </authorList>
    </citation>
    <scope>FUNCTION</scope>
    <scope>DEVELOPMENTAL STAGE</scope>
    <scope>TISSUE SPECIFICITY</scope>
    <scope>DISRUPTION PHENOTYPE</scope>
    <source>
        <strain>129/Ola</strain>
        <strain>C57BL/6J</strain>
    </source>
</reference>
<reference key="4">
    <citation type="journal article" date="2009" name="Yi Chuan">
        <title>Influence of Tripterygium wilfordii on the expression of spermiogenesis related genes Herc4, Ipo11 and Mrto4 in mice.</title>
        <authorList>
            <person name="Huang D."/>
            <person name="Li J."/>
            <person name="He L.Q."/>
        </authorList>
    </citation>
    <scope>MISCELLANEOUS</scope>
</reference>
<reference key="5">
    <citation type="journal article" date="2010" name="Cell">
        <title>A tissue-specific atlas of mouse protein phosphorylation and expression.</title>
        <authorList>
            <person name="Huttlin E.L."/>
            <person name="Jedrychowski M.P."/>
            <person name="Elias J.E."/>
            <person name="Goswami T."/>
            <person name="Rad R."/>
            <person name="Beausoleil S.A."/>
            <person name="Villen J."/>
            <person name="Haas W."/>
            <person name="Sowa M.E."/>
            <person name="Gygi S.P."/>
        </authorList>
    </citation>
    <scope>IDENTIFICATION BY MASS SPECTROMETRY [LARGE SCALE ANALYSIS]</scope>
    <source>
        <tissue>Brain</tissue>
        <tissue>Heart</tissue>
        <tissue>Kidney</tissue>
        <tissue>Liver</tissue>
        <tissue>Lung</tissue>
        <tissue>Pancreas</tissue>
        <tissue>Spleen</tissue>
        <tissue>Testis</tissue>
    </source>
</reference>
<dbReference type="EC" id="2.3.2.26"/>
<dbReference type="EMBL" id="AK009436">
    <property type="protein sequence ID" value="BAB26286.1"/>
    <property type="molecule type" value="mRNA"/>
</dbReference>
<dbReference type="EMBL" id="AK143111">
    <property type="protein sequence ID" value="BAE25272.1"/>
    <property type="molecule type" value="mRNA"/>
</dbReference>
<dbReference type="EMBL" id="AK145735">
    <property type="protein sequence ID" value="BAE26617.1"/>
    <property type="molecule type" value="mRNA"/>
</dbReference>
<dbReference type="EMBL" id="AK147723">
    <property type="protein sequence ID" value="BAE28095.1"/>
    <property type="molecule type" value="mRNA"/>
</dbReference>
<dbReference type="EMBL" id="BC026855">
    <property type="protein sequence ID" value="AAH26855.1"/>
    <property type="molecule type" value="mRNA"/>
</dbReference>
<dbReference type="EMBL" id="BC043082">
    <property type="protein sequence ID" value="AAH43082.1"/>
    <property type="molecule type" value="mRNA"/>
</dbReference>
<dbReference type="EMBL" id="BC047157">
    <property type="protein sequence ID" value="AAH47157.1"/>
    <property type="molecule type" value="mRNA"/>
</dbReference>
<dbReference type="EMBL" id="BC060033">
    <property type="protein sequence ID" value="AAH60033.1"/>
    <property type="molecule type" value="mRNA"/>
</dbReference>
<dbReference type="CCDS" id="CCDS23897.1">
    <molecule id="Q6PAV2-2"/>
</dbReference>
<dbReference type="CCDS" id="CCDS88014.1">
    <molecule id="Q6PAV2-1"/>
</dbReference>
<dbReference type="RefSeq" id="NP_080377.2">
    <molecule id="Q6PAV2-2"/>
    <property type="nucleotide sequence ID" value="NM_026101.4"/>
</dbReference>
<dbReference type="RefSeq" id="NP_084390.1">
    <molecule id="Q6PAV2-1"/>
    <property type="nucleotide sequence ID" value="NM_030114.3"/>
</dbReference>
<dbReference type="SMR" id="Q6PAV2"/>
<dbReference type="BioGRID" id="212125">
    <property type="interactions" value="16"/>
</dbReference>
<dbReference type="FunCoup" id="Q6PAV2">
    <property type="interactions" value="4375"/>
</dbReference>
<dbReference type="IntAct" id="Q6PAV2">
    <property type="interactions" value="2"/>
</dbReference>
<dbReference type="MINT" id="Q6PAV2"/>
<dbReference type="STRING" id="10090.ENSMUSP00000020258"/>
<dbReference type="iPTMnet" id="Q6PAV2"/>
<dbReference type="PhosphoSitePlus" id="Q6PAV2"/>
<dbReference type="SwissPalm" id="Q6PAV2"/>
<dbReference type="jPOST" id="Q6PAV2"/>
<dbReference type="PaxDb" id="10090-ENSMUSP00000020258"/>
<dbReference type="PeptideAtlas" id="Q6PAV2"/>
<dbReference type="ProteomicsDB" id="269738">
    <molecule id="Q6PAV2-1"/>
</dbReference>
<dbReference type="ProteomicsDB" id="269739">
    <molecule id="Q6PAV2-2"/>
</dbReference>
<dbReference type="ProteomicsDB" id="269740">
    <molecule id="Q6PAV2-3"/>
</dbReference>
<dbReference type="Pumba" id="Q6PAV2"/>
<dbReference type="Antibodypedia" id="28396">
    <property type="antibodies" value="169 antibodies from 27 providers"/>
</dbReference>
<dbReference type="DNASU" id="67345"/>
<dbReference type="Ensembl" id="ENSMUST00000020258.10">
    <molecule id="Q6PAV2-2"/>
    <property type="protein sequence ID" value="ENSMUSP00000020258.9"/>
    <property type="gene ID" value="ENSMUSG00000020064.10"/>
</dbReference>
<dbReference type="Ensembl" id="ENSMUST00000219577.2">
    <molecule id="Q6PAV2-1"/>
    <property type="protein sequence ID" value="ENSMUSP00000151886.2"/>
    <property type="gene ID" value="ENSMUSG00000020064.10"/>
</dbReference>
<dbReference type="GeneID" id="67345"/>
<dbReference type="KEGG" id="mmu:67345"/>
<dbReference type="UCSC" id="uc007fka.2">
    <molecule id="Q6PAV2-3"/>
    <property type="organism name" value="mouse"/>
</dbReference>
<dbReference type="UCSC" id="uc007fkc.2">
    <molecule id="Q6PAV2-2"/>
    <property type="organism name" value="mouse"/>
</dbReference>
<dbReference type="UCSC" id="uc007fkd.2">
    <molecule id="Q6PAV2-1"/>
    <property type="organism name" value="mouse"/>
</dbReference>
<dbReference type="AGR" id="MGI:1914595"/>
<dbReference type="CTD" id="26091"/>
<dbReference type="MGI" id="MGI:1914595">
    <property type="gene designation" value="Herc4"/>
</dbReference>
<dbReference type="VEuPathDB" id="HostDB:ENSMUSG00000020064"/>
<dbReference type="eggNOG" id="KOG0941">
    <property type="taxonomic scope" value="Eukaryota"/>
</dbReference>
<dbReference type="GeneTree" id="ENSGT00940000158924"/>
<dbReference type="HOGENOM" id="CLU_002173_5_3_1"/>
<dbReference type="InParanoid" id="Q6PAV2"/>
<dbReference type="OMA" id="FKSQACW"/>
<dbReference type="OrthoDB" id="8068875at2759"/>
<dbReference type="PhylomeDB" id="Q6PAV2"/>
<dbReference type="TreeFam" id="TF315189"/>
<dbReference type="Reactome" id="R-MMU-983168">
    <property type="pathway name" value="Antigen processing: Ubiquitination &amp; Proteasome degradation"/>
</dbReference>
<dbReference type="UniPathway" id="UPA00143"/>
<dbReference type="BioGRID-ORCS" id="67345">
    <property type="hits" value="3 hits in 78 CRISPR screens"/>
</dbReference>
<dbReference type="ChiTaRS" id="Herc4">
    <property type="organism name" value="mouse"/>
</dbReference>
<dbReference type="PRO" id="PR:Q6PAV2"/>
<dbReference type="Proteomes" id="UP000000589">
    <property type="component" value="Chromosome 10"/>
</dbReference>
<dbReference type="RNAct" id="Q6PAV2">
    <property type="molecule type" value="protein"/>
</dbReference>
<dbReference type="Bgee" id="ENSMUSG00000020064">
    <property type="expression patterns" value="Expressed in granulocyte and 267 other cell types or tissues"/>
</dbReference>
<dbReference type="ExpressionAtlas" id="Q6PAV2">
    <property type="expression patterns" value="baseline and differential"/>
</dbReference>
<dbReference type="GO" id="GO:0005829">
    <property type="term" value="C:cytosol"/>
    <property type="evidence" value="ECO:0007669"/>
    <property type="project" value="UniProtKB-SubCell"/>
</dbReference>
<dbReference type="GO" id="GO:0001650">
    <property type="term" value="C:fibrillar center"/>
    <property type="evidence" value="ECO:0007669"/>
    <property type="project" value="Ensembl"/>
</dbReference>
<dbReference type="GO" id="GO:0061630">
    <property type="term" value="F:ubiquitin protein ligase activity"/>
    <property type="evidence" value="ECO:0000304"/>
    <property type="project" value="MGI"/>
</dbReference>
<dbReference type="GO" id="GO:0004842">
    <property type="term" value="F:ubiquitin-protein transferase activity"/>
    <property type="evidence" value="ECO:0000304"/>
    <property type="project" value="UniProtKB"/>
</dbReference>
<dbReference type="GO" id="GO:0030154">
    <property type="term" value="P:cell differentiation"/>
    <property type="evidence" value="ECO:0007669"/>
    <property type="project" value="UniProtKB-KW"/>
</dbReference>
<dbReference type="GO" id="GO:0045879">
    <property type="term" value="P:negative regulation of smoothened signaling pathway"/>
    <property type="evidence" value="ECO:0007669"/>
    <property type="project" value="Ensembl"/>
</dbReference>
<dbReference type="GO" id="GO:0016567">
    <property type="term" value="P:protein ubiquitination"/>
    <property type="evidence" value="ECO:0000304"/>
    <property type="project" value="UniProtKB"/>
</dbReference>
<dbReference type="GO" id="GO:0007283">
    <property type="term" value="P:spermatogenesis"/>
    <property type="evidence" value="ECO:0000315"/>
    <property type="project" value="UniProtKB"/>
</dbReference>
<dbReference type="CDD" id="cd00078">
    <property type="entry name" value="HECTc"/>
    <property type="match status" value="1"/>
</dbReference>
<dbReference type="FunFam" id="2.130.10.30:FF:000012">
    <property type="entry name" value="probable E3 ubiquitin-protein ligase HERC3 isoform X1"/>
    <property type="match status" value="1"/>
</dbReference>
<dbReference type="FunFam" id="2.130.10.30:FF:000014">
    <property type="entry name" value="probable E3 ubiquitin-protein ligase HERC4 isoform X1"/>
    <property type="match status" value="1"/>
</dbReference>
<dbReference type="FunFam" id="3.30.2160.10:FF:000004">
    <property type="entry name" value="probable E3 ubiquitin-protein ligase HERC4 isoform X1"/>
    <property type="match status" value="1"/>
</dbReference>
<dbReference type="FunFam" id="3.30.2410.10:FF:000003">
    <property type="entry name" value="probable E3 ubiquitin-protein ligase HERC4 isoform X1"/>
    <property type="match status" value="1"/>
</dbReference>
<dbReference type="FunFam" id="3.90.1750.10:FF:000010">
    <property type="entry name" value="probable E3 ubiquitin-protein ligase HERC4 isoform X1"/>
    <property type="match status" value="1"/>
</dbReference>
<dbReference type="Gene3D" id="3.30.2160.10">
    <property type="entry name" value="Hect, E3 ligase catalytic domain"/>
    <property type="match status" value="1"/>
</dbReference>
<dbReference type="Gene3D" id="3.30.2410.10">
    <property type="entry name" value="Hect, E3 ligase catalytic domain"/>
    <property type="match status" value="1"/>
</dbReference>
<dbReference type="Gene3D" id="3.90.1750.10">
    <property type="entry name" value="Hect, E3 ligase catalytic domains"/>
    <property type="match status" value="1"/>
</dbReference>
<dbReference type="Gene3D" id="2.130.10.30">
    <property type="entry name" value="Regulator of chromosome condensation 1/beta-lactamase-inhibitor protein II"/>
    <property type="match status" value="2"/>
</dbReference>
<dbReference type="InterPro" id="IPR000569">
    <property type="entry name" value="HECT_dom"/>
</dbReference>
<dbReference type="InterPro" id="IPR035983">
    <property type="entry name" value="Hect_E3_ubiquitin_ligase"/>
</dbReference>
<dbReference type="InterPro" id="IPR009091">
    <property type="entry name" value="RCC1/BLIP-II"/>
</dbReference>
<dbReference type="InterPro" id="IPR000408">
    <property type="entry name" value="Reg_chr_condens"/>
</dbReference>
<dbReference type="InterPro" id="IPR051709">
    <property type="entry name" value="Ub-ligase/GTPase-reg"/>
</dbReference>
<dbReference type="PANTHER" id="PTHR45622:SF58">
    <property type="entry name" value="REGULATOR OF CHROMOSOME CONDENSATION DOMAIN-CONTAINING PROTEIN"/>
    <property type="match status" value="1"/>
</dbReference>
<dbReference type="PANTHER" id="PTHR45622">
    <property type="entry name" value="UBIQUITIN-PROTEIN LIGASE E3A-RELATED"/>
    <property type="match status" value="1"/>
</dbReference>
<dbReference type="Pfam" id="PF00632">
    <property type="entry name" value="HECT"/>
    <property type="match status" value="1"/>
</dbReference>
<dbReference type="Pfam" id="PF25390">
    <property type="entry name" value="WD40_RLD"/>
    <property type="match status" value="1"/>
</dbReference>
<dbReference type="PRINTS" id="PR00633">
    <property type="entry name" value="RCCNDNSATION"/>
</dbReference>
<dbReference type="SMART" id="SM00119">
    <property type="entry name" value="HECTc"/>
    <property type="match status" value="1"/>
</dbReference>
<dbReference type="SUPFAM" id="SSF56204">
    <property type="entry name" value="Hect, E3 ligase catalytic domain"/>
    <property type="match status" value="1"/>
</dbReference>
<dbReference type="SUPFAM" id="SSF50985">
    <property type="entry name" value="RCC1/BLIP-II"/>
    <property type="match status" value="1"/>
</dbReference>
<dbReference type="PROSITE" id="PS50237">
    <property type="entry name" value="HECT"/>
    <property type="match status" value="1"/>
</dbReference>
<dbReference type="PROSITE" id="PS00626">
    <property type="entry name" value="RCC1_2"/>
    <property type="match status" value="3"/>
</dbReference>
<dbReference type="PROSITE" id="PS50012">
    <property type="entry name" value="RCC1_3"/>
    <property type="match status" value="7"/>
</dbReference>
<gene>
    <name type="primary">Herc4</name>
</gene>